<accession>U3UBT3</accession>
<name>PLS6_PHYSA</name>
<reference key="1">
    <citation type="journal article" date="2013" name="PLoS ONE">
        <title>Structure, antimicrobial activities and mode of interaction with membranes of novel [corrected] phylloseptins from the painted-belly leaf frog, Phyllomedusa sauvagii.</title>
        <authorList>
            <person name="Raja Z."/>
            <person name="Andre S."/>
            <person name="Piesse C."/>
            <person name="Sereno D."/>
            <person name="Nicolas P."/>
            <person name="Foulon T."/>
            <person name="Oury B."/>
            <person name="Ladram A."/>
        </authorList>
    </citation>
    <scope>NUCLEOTIDE SEQUENCE [MRNA]</scope>
    <source>
        <tissue>Skin secretion</tissue>
    </source>
</reference>
<dbReference type="EMBL" id="HE974361">
    <property type="protein sequence ID" value="CCK33668.1"/>
    <property type="molecule type" value="mRNA"/>
</dbReference>
<dbReference type="GO" id="GO:0005576">
    <property type="term" value="C:extracellular region"/>
    <property type="evidence" value="ECO:0007669"/>
    <property type="project" value="UniProtKB-SubCell"/>
</dbReference>
<dbReference type="GO" id="GO:0016020">
    <property type="term" value="C:membrane"/>
    <property type="evidence" value="ECO:0007669"/>
    <property type="project" value="UniProtKB-KW"/>
</dbReference>
<dbReference type="GO" id="GO:0044218">
    <property type="term" value="C:other organism cell membrane"/>
    <property type="evidence" value="ECO:0007669"/>
    <property type="project" value="UniProtKB-KW"/>
</dbReference>
<dbReference type="GO" id="GO:0045087">
    <property type="term" value="P:innate immune response"/>
    <property type="evidence" value="ECO:0007669"/>
    <property type="project" value="UniProtKB-KW"/>
</dbReference>
<dbReference type="InterPro" id="IPR004275">
    <property type="entry name" value="Frog_antimicrobial_propeptide"/>
</dbReference>
<dbReference type="InterPro" id="IPR016322">
    <property type="entry name" value="FSAP"/>
</dbReference>
<dbReference type="Pfam" id="PF03032">
    <property type="entry name" value="FSAP_sig_propep"/>
    <property type="match status" value="1"/>
</dbReference>
<dbReference type="PIRSF" id="PIRSF001822">
    <property type="entry name" value="Dermaseptin_precursor"/>
    <property type="match status" value="1"/>
</dbReference>
<comment type="function">
    <text evidence="1">Antimicrobial peptide with high activity against Gram-positive bacteria, low activity against Gram-negative bacteria, and moderate activity against fungi (By similarity). Acts by causing bacterial membrane disruption inducing leakage of the intracellular content followed by cell death (By similarity). It adopts an alpha-helical amphipathic structure in membrane environments (By similarity). Also shows highly potent antiparasitic activity against Leishmania species (By similarity). Shows moderate hemolytic activity on human erythrocytes (By similarity). Is also active on human monocytes (By similarity).</text>
</comment>
<comment type="subcellular location">
    <subcellularLocation>
        <location evidence="6">Secreted</location>
    </subcellularLocation>
    <subcellularLocation>
        <location evidence="1">Target cell membrane</location>
    </subcellularLocation>
    <text evidence="1">Forms a helical membrane channel in the target.</text>
</comment>
<comment type="tissue specificity">
    <text evidence="6">Expressed by the skin glands.</text>
</comment>
<comment type="similarity">
    <text evidence="5">Belongs to the frog skin active peptide (FSAP) family. Phylloseptin subfamily.</text>
</comment>
<feature type="signal peptide" evidence="2">
    <location>
        <begin position="1"/>
        <end position="22"/>
    </location>
</feature>
<feature type="propeptide" id="PRO_0000449581" evidence="1">
    <location>
        <begin position="23"/>
        <end position="46"/>
    </location>
</feature>
<feature type="peptide" id="PRO_5004648567" description="Phylloseptin-S6" evidence="1">
    <location>
        <begin position="47"/>
        <end position="65"/>
    </location>
</feature>
<feature type="region of interest" description="Disordered" evidence="3">
    <location>
        <begin position="25"/>
        <end position="44"/>
    </location>
</feature>
<feature type="compositionally biased region" description="Acidic residues" evidence="3">
    <location>
        <begin position="30"/>
        <end position="41"/>
    </location>
</feature>
<feature type="modified residue" description="Leucine amide" evidence="1">
    <location>
        <position position="65"/>
    </location>
</feature>
<keyword id="KW-0027">Amidation</keyword>
<keyword id="KW-0878">Amphibian defense peptide</keyword>
<keyword id="KW-0165">Cleavage on pair of basic residues</keyword>
<keyword id="KW-0391">Immunity</keyword>
<keyword id="KW-0399">Innate immunity</keyword>
<keyword id="KW-0472">Membrane</keyword>
<keyword id="KW-0964">Secreted</keyword>
<keyword id="KW-0732">Signal</keyword>
<keyword id="KW-1052">Target cell membrane</keyword>
<keyword id="KW-1053">Target membrane</keyword>
<organism>
    <name type="scientific">Phyllomedusa sauvagei</name>
    <name type="common">Sauvage's leaf frog</name>
    <dbReference type="NCBI Taxonomy" id="8395"/>
    <lineage>
        <taxon>Eukaryota</taxon>
        <taxon>Metazoa</taxon>
        <taxon>Chordata</taxon>
        <taxon>Craniata</taxon>
        <taxon>Vertebrata</taxon>
        <taxon>Euteleostomi</taxon>
        <taxon>Amphibia</taxon>
        <taxon>Batrachia</taxon>
        <taxon>Anura</taxon>
        <taxon>Neobatrachia</taxon>
        <taxon>Hyloidea</taxon>
        <taxon>Hylidae</taxon>
        <taxon>Phyllomedusinae</taxon>
        <taxon>Phyllomedusa</taxon>
    </lineage>
</organism>
<protein>
    <recommendedName>
        <fullName evidence="4">Phylloseptin-S6</fullName>
        <shortName evidence="4">PLS-S6</shortName>
    </recommendedName>
</protein>
<proteinExistence type="inferred from homology"/>
<sequence>MAFLKKSLFLVLFLGLVSLSICEEEKRETEEEEHDQEEDDKSEEKRFLSLIPHIVSGVASIAKHLG</sequence>
<evidence type="ECO:0000250" key="1">
    <source>
        <dbReference type="UniProtKB" id="F7UI84"/>
    </source>
</evidence>
<evidence type="ECO:0000255" key="2"/>
<evidence type="ECO:0000256" key="3">
    <source>
        <dbReference type="SAM" id="MobiDB-lite"/>
    </source>
</evidence>
<evidence type="ECO:0000303" key="4">
    <source>
    </source>
</evidence>
<evidence type="ECO:0000305" key="5"/>
<evidence type="ECO:0000305" key="6">
    <source>
    </source>
</evidence>